<name>EFTS_GEOSM</name>
<proteinExistence type="inferred from homology"/>
<sequence length="216" mass="23382">MSITAAQVNELRKVTGAGLMDCKKALTETGGDHEKAIDYLRTKGLAAASKKAGRAATEGLVGSYIHAGGKIGVLVEVNCETDFVAKNENFQAFVKDIAMHIAAASPLYVRREEVPAELIEREKAIYREKAKESGKPAAIIEKILDGQINKFFADICLLEQTYVKDPDKTIQTFLNETIASIGENMSIRRFAKFVLGEGLAKKESDFAAEVAAAVGQ</sequence>
<dbReference type="EMBL" id="CP001661">
    <property type="protein sequence ID" value="ACT17542.1"/>
    <property type="molecule type" value="Genomic_DNA"/>
</dbReference>
<dbReference type="SMR" id="C6E513"/>
<dbReference type="STRING" id="443144.GM21_1486"/>
<dbReference type="KEGG" id="gem:GM21_1486"/>
<dbReference type="eggNOG" id="COG0264">
    <property type="taxonomic scope" value="Bacteria"/>
</dbReference>
<dbReference type="HOGENOM" id="CLU_047155_1_1_7"/>
<dbReference type="OrthoDB" id="9808348at2"/>
<dbReference type="GO" id="GO:0005737">
    <property type="term" value="C:cytoplasm"/>
    <property type="evidence" value="ECO:0007669"/>
    <property type="project" value="UniProtKB-SubCell"/>
</dbReference>
<dbReference type="GO" id="GO:0003746">
    <property type="term" value="F:translation elongation factor activity"/>
    <property type="evidence" value="ECO:0007669"/>
    <property type="project" value="UniProtKB-UniRule"/>
</dbReference>
<dbReference type="CDD" id="cd14275">
    <property type="entry name" value="UBA_EF-Ts"/>
    <property type="match status" value="1"/>
</dbReference>
<dbReference type="FunFam" id="1.10.286.20:FF:000001">
    <property type="entry name" value="Elongation factor Ts"/>
    <property type="match status" value="1"/>
</dbReference>
<dbReference type="FunFam" id="1.10.8.10:FF:000001">
    <property type="entry name" value="Elongation factor Ts"/>
    <property type="match status" value="1"/>
</dbReference>
<dbReference type="Gene3D" id="1.10.286.20">
    <property type="match status" value="1"/>
</dbReference>
<dbReference type="Gene3D" id="1.10.8.10">
    <property type="entry name" value="DNA helicase RuvA subunit, C-terminal domain"/>
    <property type="match status" value="1"/>
</dbReference>
<dbReference type="Gene3D" id="3.30.479.20">
    <property type="entry name" value="Elongation factor Ts, dimerisation domain"/>
    <property type="match status" value="1"/>
</dbReference>
<dbReference type="HAMAP" id="MF_00050">
    <property type="entry name" value="EF_Ts"/>
    <property type="match status" value="1"/>
</dbReference>
<dbReference type="InterPro" id="IPR036402">
    <property type="entry name" value="EF-Ts_dimer_sf"/>
</dbReference>
<dbReference type="InterPro" id="IPR001816">
    <property type="entry name" value="Transl_elong_EFTs/EF1B"/>
</dbReference>
<dbReference type="InterPro" id="IPR014039">
    <property type="entry name" value="Transl_elong_EFTs/EF1B_dimer"/>
</dbReference>
<dbReference type="InterPro" id="IPR018101">
    <property type="entry name" value="Transl_elong_Ts_CS"/>
</dbReference>
<dbReference type="InterPro" id="IPR009060">
    <property type="entry name" value="UBA-like_sf"/>
</dbReference>
<dbReference type="NCBIfam" id="TIGR00116">
    <property type="entry name" value="tsf"/>
    <property type="match status" value="2"/>
</dbReference>
<dbReference type="PANTHER" id="PTHR11741">
    <property type="entry name" value="ELONGATION FACTOR TS"/>
    <property type="match status" value="1"/>
</dbReference>
<dbReference type="PANTHER" id="PTHR11741:SF0">
    <property type="entry name" value="ELONGATION FACTOR TS, MITOCHONDRIAL"/>
    <property type="match status" value="1"/>
</dbReference>
<dbReference type="Pfam" id="PF00889">
    <property type="entry name" value="EF_TS"/>
    <property type="match status" value="2"/>
</dbReference>
<dbReference type="SUPFAM" id="SSF54713">
    <property type="entry name" value="Elongation factor Ts (EF-Ts), dimerisation domain"/>
    <property type="match status" value="1"/>
</dbReference>
<dbReference type="SUPFAM" id="SSF46934">
    <property type="entry name" value="UBA-like"/>
    <property type="match status" value="1"/>
</dbReference>
<dbReference type="PROSITE" id="PS01126">
    <property type="entry name" value="EF_TS_1"/>
    <property type="match status" value="1"/>
</dbReference>
<dbReference type="PROSITE" id="PS01127">
    <property type="entry name" value="EF_TS_2"/>
    <property type="match status" value="1"/>
</dbReference>
<protein>
    <recommendedName>
        <fullName evidence="1">Elongation factor Ts</fullName>
        <shortName evidence="1">EF-Ts</shortName>
    </recommendedName>
</protein>
<evidence type="ECO:0000255" key="1">
    <source>
        <dbReference type="HAMAP-Rule" id="MF_00050"/>
    </source>
</evidence>
<reference key="1">
    <citation type="submission" date="2009-07" db="EMBL/GenBank/DDBJ databases">
        <title>Complete sequence of Geobacter sp. M21.</title>
        <authorList>
            <consortium name="US DOE Joint Genome Institute"/>
            <person name="Lucas S."/>
            <person name="Copeland A."/>
            <person name="Lapidus A."/>
            <person name="Glavina del Rio T."/>
            <person name="Dalin E."/>
            <person name="Tice H."/>
            <person name="Bruce D."/>
            <person name="Goodwin L."/>
            <person name="Pitluck S."/>
            <person name="Saunders E."/>
            <person name="Brettin T."/>
            <person name="Detter J.C."/>
            <person name="Han C."/>
            <person name="Larimer F."/>
            <person name="Land M."/>
            <person name="Hauser L."/>
            <person name="Kyrpides N."/>
            <person name="Ovchinnikova G."/>
            <person name="Lovley D."/>
        </authorList>
    </citation>
    <scope>NUCLEOTIDE SEQUENCE [LARGE SCALE GENOMIC DNA]</scope>
    <source>
        <strain>M21</strain>
    </source>
</reference>
<organism>
    <name type="scientific">Geobacter sp. (strain M21)</name>
    <dbReference type="NCBI Taxonomy" id="443144"/>
    <lineage>
        <taxon>Bacteria</taxon>
        <taxon>Pseudomonadati</taxon>
        <taxon>Thermodesulfobacteriota</taxon>
        <taxon>Desulfuromonadia</taxon>
        <taxon>Geobacterales</taxon>
        <taxon>Geobacteraceae</taxon>
        <taxon>Geobacter</taxon>
    </lineage>
</organism>
<keyword id="KW-0963">Cytoplasm</keyword>
<keyword id="KW-0251">Elongation factor</keyword>
<keyword id="KW-0648">Protein biosynthesis</keyword>
<accession>C6E513</accession>
<feature type="chain" id="PRO_1000202241" description="Elongation factor Ts">
    <location>
        <begin position="1"/>
        <end position="216"/>
    </location>
</feature>
<feature type="region of interest" description="Involved in Mg(2+) ion dislocation from EF-Tu" evidence="1">
    <location>
        <begin position="81"/>
        <end position="84"/>
    </location>
</feature>
<comment type="function">
    <text evidence="1">Associates with the EF-Tu.GDP complex and induces the exchange of GDP to GTP. It remains bound to the aminoacyl-tRNA.EF-Tu.GTP complex up to the GTP hydrolysis stage on the ribosome.</text>
</comment>
<comment type="subcellular location">
    <subcellularLocation>
        <location evidence="1">Cytoplasm</location>
    </subcellularLocation>
</comment>
<comment type="similarity">
    <text evidence="1">Belongs to the EF-Ts family.</text>
</comment>
<gene>
    <name evidence="1" type="primary">tsf</name>
    <name type="ordered locus">GM21_1486</name>
</gene>